<reference evidence="6" key="1">
    <citation type="journal article" date="2001" name="DNA Res.">
        <title>Complete genomic sequence of the filamentous nitrogen-fixing cyanobacterium Anabaena sp. strain PCC 7120.</title>
        <authorList>
            <person name="Kaneko T."/>
            <person name="Nakamura Y."/>
            <person name="Wolk C.P."/>
            <person name="Kuritz T."/>
            <person name="Sasamoto S."/>
            <person name="Watanabe A."/>
            <person name="Iriguchi M."/>
            <person name="Ishikawa A."/>
            <person name="Kawashima K."/>
            <person name="Kimura T."/>
            <person name="Kishida Y."/>
            <person name="Kohara M."/>
            <person name="Matsumoto M."/>
            <person name="Matsuno A."/>
            <person name="Muraki A."/>
            <person name="Nakazaki N."/>
            <person name="Shimpo S."/>
            <person name="Sugimoto M."/>
            <person name="Takazawa M."/>
            <person name="Yamada M."/>
            <person name="Yasuda M."/>
            <person name="Tabata S."/>
        </authorList>
    </citation>
    <scope>NUCLEOTIDE SEQUENCE [LARGE SCALE GENOMIC DNA]</scope>
    <source>
        <strain>PCC 7120 / SAG 25.82 / UTEX 2576</strain>
    </source>
</reference>
<reference key="2">
    <citation type="journal article" date="2010" name="Mol. Microbiol.">
        <title>Ectopic expression of hetP can partially bypass the need for hetR in heterocyst differentiation by Anabaena sp. strain PCC 7120.</title>
        <authorList>
            <person name="Higa K.C."/>
            <person name="Callahan S.M."/>
        </authorList>
    </citation>
    <scope>FUNCTION</scope>
    <source>
        <strain>PCC 7120 / SAG 25.82 / UTEX 2576</strain>
    </source>
</reference>
<reference key="3">
    <citation type="journal article" date="2016" name="Proc. Natl. Acad. Sci. U.S.A.">
        <title>The heterocyst regulatory protein HetP and its homologs modulate heterocyst commitment in Anabaena sp. strain PCC 7120.</title>
        <authorList>
            <person name="Videau P."/>
            <person name="Rivers O.S."/>
            <person name="Hurd K."/>
            <person name="Ushijima B."/>
            <person name="Oshiro R.T."/>
            <person name="Ende R.J."/>
            <person name="O'Hanlon S.M."/>
            <person name="Cozy L.M."/>
        </authorList>
    </citation>
    <scope>FUNCTION</scope>
    <scope>SUBUNIT</scope>
    <scope>INDUCTION BY NITROGEN DEPRIVATION</scope>
    <scope>DOMAIN</scope>
    <scope>DISRUPTION PHENOTYPE</scope>
    <source>
        <strain>PCC 7120 / SAG 25.82 / UTEX 2576</strain>
    </source>
</reference>
<gene>
    <name type="ordered locus">alr2902</name>
</gene>
<sequence length="136" mass="15410">MSYHINSSQNRFHKIITTEQLNQVIEAITDGRYSWACVLILRFVGYNPLHFIPQRTYSRLMKDNRQVANIPGSLNNGKSISANSPITNSSVVNKASTQDLNQSNNSDYLTTPEPDKRGNIPGYLETKMAVMYSRNQ</sequence>
<keyword id="KW-0364">Heterocyst</keyword>
<keyword id="KW-1185">Reference proteome</keyword>
<feature type="chain" id="PRO_0000459614" description="HetP-like commitment protein Alr2902">
    <location>
        <begin position="1"/>
        <end position="136"/>
    </location>
</feature>
<feature type="region of interest" description="Disordered" evidence="1">
    <location>
        <begin position="94"/>
        <end position="120"/>
    </location>
</feature>
<feature type="compositionally biased region" description="Polar residues" evidence="1">
    <location>
        <begin position="94"/>
        <end position="109"/>
    </location>
</feature>
<protein>
    <recommendedName>
        <fullName evidence="4">HetP-like commitment protein Alr2902</fullName>
    </recommendedName>
</protein>
<accession>Q8YT25</accession>
<comment type="function">
    <text evidence="2 3">Delays heterocyst differentiation and commitment when nitrogen is limiting (PubMed:27791130). Interplay between the 4 HetP paralogs controls the timing of commitment to heterocyst formation and its duration (PubMed:27791130). Epistatic analysis show that the 3 paralogs act upstream of hetP to delay commitment (asl1930, alr3234) or inhibit development (alr2902) (PubMed:27791130). Asl1930 and Alr3234 must also attenuate the activity of Alr2902 (PubMed:27791130). When only this homolog is present no heterocysts are formed, showing it inhibits development (PubMed:27791130). Ectopic expression partially complements a hetP deletion (PubMed:20545862).</text>
</comment>
<comment type="subunit">
    <text evidence="3">In bacterial two-hybrid assays interacts robustly with HetR and Alr3234 and weakly with itself, HetP and Asl1930 (PubMed:27791130).</text>
</comment>
<comment type="induction">
    <text evidence="3">Transcription is up-regulated by 6 hours after nitrogen stepdown, and remains high for at least 24 hours (PubMed:27791130).</text>
</comment>
<comment type="domain">
    <text evidence="3">The N-terminus (residues 1-68) complements a hetP deletion for heterocyst formation but only partially restores nitrogenase activity; it partially bypasses the requirement for heterocyst differentiation master regulator hetR (PubMed:27791130).</text>
</comment>
<comment type="disruption phenotype">
    <text evidence="3">Single deletion, no change in heterocyst differentiation, in a double hetP-asr2902 deletion no heterocysts appear before 48 hours, by 120 hours only 3% heterocysts form. A triple asl1930-alr2902-alr3234 deletion makes 50% more heterocysts than wild-type (although they are not active for N(2) fixation), while a quadruple hetP-asl1930-alr2902-alr3234 deletion has delayed development but makes wild-type levels of N(2)-fixing heterocysts by 72 hours.</text>
</comment>
<comment type="miscellaneous">
    <text evidence="2 3">In Nostoc filaments, approximately every 10th vegetative cell terminally differentiates into a heterocyst specialized for nitrogen fixation under nitrogen deficiency (PubMed:20545862, PubMed:27791130).</text>
</comment>
<comment type="similarity">
    <text evidence="5">Belongs to the HetP family.</text>
</comment>
<dbReference type="EMBL" id="BA000019">
    <property type="protein sequence ID" value="BAB74601.1"/>
    <property type="molecule type" value="Genomic_DNA"/>
</dbReference>
<dbReference type="PIR" id="AG2168">
    <property type="entry name" value="AG2168"/>
</dbReference>
<dbReference type="RefSeq" id="WP_010997053.1">
    <property type="nucleotide sequence ID" value="NZ_RSCN01000003.1"/>
</dbReference>
<dbReference type="SMR" id="Q8YT25"/>
<dbReference type="KEGG" id="ana:alr2902"/>
<dbReference type="eggNOG" id="ENOG5031YHK">
    <property type="taxonomic scope" value="Bacteria"/>
</dbReference>
<dbReference type="OrthoDB" id="532598at2"/>
<dbReference type="Proteomes" id="UP000002483">
    <property type="component" value="Chromosome"/>
</dbReference>
<dbReference type="GO" id="GO:0043158">
    <property type="term" value="P:heterocyst development"/>
    <property type="evidence" value="ECO:0007669"/>
    <property type="project" value="UniProtKB-KW"/>
</dbReference>
<dbReference type="InterPro" id="IPR049598">
    <property type="entry name" value="HetP-like"/>
</dbReference>
<dbReference type="NCBIfam" id="NF037966">
    <property type="entry name" value="HetP_family"/>
    <property type="match status" value="1"/>
</dbReference>
<organism>
    <name type="scientific">Nostoc sp. (strain PCC 7120 / SAG 25.82 / UTEX 2576)</name>
    <dbReference type="NCBI Taxonomy" id="103690"/>
    <lineage>
        <taxon>Bacteria</taxon>
        <taxon>Bacillati</taxon>
        <taxon>Cyanobacteriota</taxon>
        <taxon>Cyanophyceae</taxon>
        <taxon>Nostocales</taxon>
        <taxon>Nostocaceae</taxon>
        <taxon>Nostoc</taxon>
    </lineage>
</organism>
<evidence type="ECO:0000256" key="1">
    <source>
        <dbReference type="SAM" id="MobiDB-lite"/>
    </source>
</evidence>
<evidence type="ECO:0000269" key="2">
    <source>
    </source>
</evidence>
<evidence type="ECO:0000269" key="3">
    <source>
    </source>
</evidence>
<evidence type="ECO:0000303" key="4">
    <source>
    </source>
</evidence>
<evidence type="ECO:0000305" key="5"/>
<evidence type="ECO:0000312" key="6">
    <source>
        <dbReference type="EMBL" id="BAB74601.1"/>
    </source>
</evidence>
<name>H2902_NOSS1</name>
<proteinExistence type="evidence at protein level"/>